<sequence length="349" mass="39194">MGIKGLTKLLADNAPDSMKEQKFESYFGRKIAIDASMSIYSFLVVVGRTGTDMLTNDAGEVTSHLIGMFNRTIRVLEAGLKPVYVFDGKPPEMKGGELAKRLARREEAVESLATAKLEGNEADMEKYSKRTVKVTKQHNEDCRKLLRLMGVPVVEAPSEAEAECASLCKTGKVYAVASEDMDSLTFGSTRFLRHLMEPVSRKLPVMEFDMNKVLEGLSLTMDQFVDLCILCGCDYIDTIRGIGAQTALKLIRQHGSLEKILENLNKDRYQIPDPWPYEEARRLFKEPLVTQAEDVPDFKWTAPDAEGLIKFLVEENGFNHDRVQTAIKKIQLAKNKSSQGRFVNCLCRL</sequence>
<feature type="chain" id="PRO_0000403527" description="Flap endonuclease 1-B">
    <location>
        <begin position="1"/>
        <end position="349"/>
    </location>
</feature>
<feature type="region of interest" description="N-domain">
    <location>
        <begin position="1"/>
        <end position="105"/>
    </location>
</feature>
<feature type="region of interest" description="I-domain">
    <location>
        <begin position="123"/>
        <end position="254"/>
    </location>
</feature>
<feature type="binding site" evidence="1">
    <location>
        <position position="34"/>
    </location>
    <ligand>
        <name>Mg(2+)</name>
        <dbReference type="ChEBI" id="CHEBI:18420"/>
        <label>1</label>
    </ligand>
</feature>
<feature type="binding site" evidence="1">
    <location>
        <position position="71"/>
    </location>
    <ligand>
        <name>DNA</name>
        <dbReference type="ChEBI" id="CHEBI:16991"/>
    </ligand>
</feature>
<feature type="binding site" evidence="1">
    <location>
        <position position="87"/>
    </location>
    <ligand>
        <name>Mg(2+)</name>
        <dbReference type="ChEBI" id="CHEBI:18420"/>
        <label>1</label>
    </ligand>
</feature>
<feature type="binding site" evidence="1">
    <location>
        <position position="159"/>
    </location>
    <ligand>
        <name>DNA</name>
        <dbReference type="ChEBI" id="CHEBI:16991"/>
    </ligand>
</feature>
<feature type="binding site" evidence="1">
    <location>
        <position position="159"/>
    </location>
    <ligand>
        <name>Mg(2+)</name>
        <dbReference type="ChEBI" id="CHEBI:18420"/>
        <label>1</label>
    </ligand>
</feature>
<feature type="binding site" evidence="1">
    <location>
        <position position="161"/>
    </location>
    <ligand>
        <name>Mg(2+)</name>
        <dbReference type="ChEBI" id="CHEBI:18420"/>
        <label>1</label>
    </ligand>
</feature>
<feature type="binding site" evidence="1">
    <location>
        <position position="180"/>
    </location>
    <ligand>
        <name>Mg(2+)</name>
        <dbReference type="ChEBI" id="CHEBI:18420"/>
        <label>2</label>
    </ligand>
</feature>
<feature type="binding site" evidence="1">
    <location>
        <position position="182"/>
    </location>
    <ligand>
        <name>Mg(2+)</name>
        <dbReference type="ChEBI" id="CHEBI:18420"/>
        <label>2</label>
    </ligand>
</feature>
<feature type="binding site" evidence="1">
    <location>
        <position position="232"/>
    </location>
    <ligand>
        <name>DNA</name>
        <dbReference type="ChEBI" id="CHEBI:16991"/>
    </ligand>
</feature>
<feature type="binding site" evidence="1">
    <location>
        <position position="234"/>
    </location>
    <ligand>
        <name>DNA</name>
        <dbReference type="ChEBI" id="CHEBI:16991"/>
    </ligand>
</feature>
<feature type="binding site" evidence="1">
    <location>
        <position position="234"/>
    </location>
    <ligand>
        <name>Mg(2+)</name>
        <dbReference type="ChEBI" id="CHEBI:18420"/>
        <label>2</label>
    </ligand>
</feature>
<organism>
    <name type="scientific">Physcomitrium patens</name>
    <name type="common">Spreading-leaved earth moss</name>
    <name type="synonym">Physcomitrella patens</name>
    <dbReference type="NCBI Taxonomy" id="3218"/>
    <lineage>
        <taxon>Eukaryota</taxon>
        <taxon>Viridiplantae</taxon>
        <taxon>Streptophyta</taxon>
        <taxon>Embryophyta</taxon>
        <taxon>Bryophyta</taxon>
        <taxon>Bryophytina</taxon>
        <taxon>Bryopsida</taxon>
        <taxon>Funariidae</taxon>
        <taxon>Funariales</taxon>
        <taxon>Funariaceae</taxon>
        <taxon>Physcomitrium</taxon>
    </lineage>
</organism>
<name>FEN12_PHYPA</name>
<gene>
    <name evidence="1" type="primary">FEN1-B</name>
    <name type="ORF">PHYPADRAFT_200726</name>
</gene>
<keyword id="KW-0227">DNA damage</keyword>
<keyword id="KW-0234">DNA repair</keyword>
<keyword id="KW-0235">DNA replication</keyword>
<keyword id="KW-0255">Endonuclease</keyword>
<keyword id="KW-0269">Exonuclease</keyword>
<keyword id="KW-0378">Hydrolase</keyword>
<keyword id="KW-0460">Magnesium</keyword>
<keyword id="KW-0479">Metal-binding</keyword>
<keyword id="KW-0496">Mitochondrion</keyword>
<keyword id="KW-0540">Nuclease</keyword>
<keyword id="KW-0539">Nucleus</keyword>
<keyword id="KW-0597">Phosphoprotein</keyword>
<keyword id="KW-1185">Reference proteome</keyword>
<accession>A9U328</accession>
<dbReference type="EC" id="3.1.-.-" evidence="1"/>
<dbReference type="EMBL" id="DS545336">
    <property type="protein sequence ID" value="EDQ49912.1"/>
    <property type="molecule type" value="Genomic_DNA"/>
</dbReference>
<dbReference type="RefSeq" id="XP_001785260.1">
    <property type="nucleotide sequence ID" value="XM_001785208.1"/>
</dbReference>
<dbReference type="SMR" id="A9U328"/>
<dbReference type="FunCoup" id="A9U328">
    <property type="interactions" value="3752"/>
</dbReference>
<dbReference type="PaxDb" id="3218-PP1S456_8V6.1"/>
<dbReference type="eggNOG" id="KOG2519">
    <property type="taxonomic scope" value="Eukaryota"/>
</dbReference>
<dbReference type="HOGENOM" id="CLU_032444_2_0_1"/>
<dbReference type="InParanoid" id="A9U328"/>
<dbReference type="Proteomes" id="UP000006727">
    <property type="component" value="Unplaced"/>
</dbReference>
<dbReference type="GO" id="GO:0005739">
    <property type="term" value="C:mitochondrion"/>
    <property type="evidence" value="ECO:0007669"/>
    <property type="project" value="UniProtKB-SubCell"/>
</dbReference>
<dbReference type="GO" id="GO:0005730">
    <property type="term" value="C:nucleolus"/>
    <property type="evidence" value="ECO:0007669"/>
    <property type="project" value="UniProtKB-SubCell"/>
</dbReference>
<dbReference type="GO" id="GO:0005654">
    <property type="term" value="C:nucleoplasm"/>
    <property type="evidence" value="ECO:0007669"/>
    <property type="project" value="UniProtKB-SubCell"/>
</dbReference>
<dbReference type="GO" id="GO:0008409">
    <property type="term" value="F:5'-3' exonuclease activity"/>
    <property type="evidence" value="ECO:0000318"/>
    <property type="project" value="GO_Central"/>
</dbReference>
<dbReference type="GO" id="GO:0017108">
    <property type="term" value="F:5'-flap endonuclease activity"/>
    <property type="evidence" value="ECO:0000318"/>
    <property type="project" value="GO_Central"/>
</dbReference>
<dbReference type="GO" id="GO:0003677">
    <property type="term" value="F:DNA binding"/>
    <property type="evidence" value="ECO:0007669"/>
    <property type="project" value="UniProtKB-UniRule"/>
</dbReference>
<dbReference type="GO" id="GO:0000287">
    <property type="term" value="F:magnesium ion binding"/>
    <property type="evidence" value="ECO:0007669"/>
    <property type="project" value="UniProtKB-UniRule"/>
</dbReference>
<dbReference type="GO" id="GO:0006284">
    <property type="term" value="P:base-excision repair"/>
    <property type="evidence" value="ECO:0007669"/>
    <property type="project" value="UniProtKB-UniRule"/>
</dbReference>
<dbReference type="GO" id="GO:0043137">
    <property type="term" value="P:DNA replication, removal of RNA primer"/>
    <property type="evidence" value="ECO:0007669"/>
    <property type="project" value="UniProtKB-UniRule"/>
</dbReference>
<dbReference type="CDD" id="cd09907">
    <property type="entry name" value="H3TH_FEN1-Euk"/>
    <property type="match status" value="1"/>
</dbReference>
<dbReference type="CDD" id="cd09867">
    <property type="entry name" value="PIN_FEN1"/>
    <property type="match status" value="1"/>
</dbReference>
<dbReference type="FunFam" id="1.10.150.20:FF:000009">
    <property type="entry name" value="Flap endonuclease 1"/>
    <property type="match status" value="1"/>
</dbReference>
<dbReference type="FunFam" id="3.40.50.1010:FF:000015">
    <property type="entry name" value="Flap endonuclease 1"/>
    <property type="match status" value="1"/>
</dbReference>
<dbReference type="Gene3D" id="1.10.150.20">
    <property type="entry name" value="5' to 3' exonuclease, C-terminal subdomain"/>
    <property type="match status" value="1"/>
</dbReference>
<dbReference type="Gene3D" id="3.40.50.1010">
    <property type="entry name" value="5'-nuclease"/>
    <property type="match status" value="1"/>
</dbReference>
<dbReference type="HAMAP" id="MF_00614">
    <property type="entry name" value="Fen"/>
    <property type="match status" value="1"/>
</dbReference>
<dbReference type="InterPro" id="IPR002421">
    <property type="entry name" value="5-3_exonuclease"/>
</dbReference>
<dbReference type="InterPro" id="IPR036279">
    <property type="entry name" value="5-3_exonuclease_C_sf"/>
</dbReference>
<dbReference type="InterPro" id="IPR023426">
    <property type="entry name" value="Flap_endonuc"/>
</dbReference>
<dbReference type="InterPro" id="IPR008918">
    <property type="entry name" value="HhH2"/>
</dbReference>
<dbReference type="InterPro" id="IPR029060">
    <property type="entry name" value="PIN-like_dom_sf"/>
</dbReference>
<dbReference type="InterPro" id="IPR006086">
    <property type="entry name" value="XPG-I_dom"/>
</dbReference>
<dbReference type="InterPro" id="IPR006084">
    <property type="entry name" value="XPG/Rad2"/>
</dbReference>
<dbReference type="InterPro" id="IPR019974">
    <property type="entry name" value="XPG_CS"/>
</dbReference>
<dbReference type="InterPro" id="IPR006085">
    <property type="entry name" value="XPG_DNA_repair_N"/>
</dbReference>
<dbReference type="PANTHER" id="PTHR11081:SF9">
    <property type="entry name" value="FLAP ENDONUCLEASE 1"/>
    <property type="match status" value="1"/>
</dbReference>
<dbReference type="PANTHER" id="PTHR11081">
    <property type="entry name" value="FLAP ENDONUCLEASE FAMILY MEMBER"/>
    <property type="match status" value="1"/>
</dbReference>
<dbReference type="Pfam" id="PF00867">
    <property type="entry name" value="XPG_I"/>
    <property type="match status" value="1"/>
</dbReference>
<dbReference type="Pfam" id="PF00752">
    <property type="entry name" value="XPG_N"/>
    <property type="match status" value="1"/>
</dbReference>
<dbReference type="PRINTS" id="PR00853">
    <property type="entry name" value="XPGRADSUPER"/>
</dbReference>
<dbReference type="SMART" id="SM00475">
    <property type="entry name" value="53EXOc"/>
    <property type="match status" value="1"/>
</dbReference>
<dbReference type="SMART" id="SM00279">
    <property type="entry name" value="HhH2"/>
    <property type="match status" value="1"/>
</dbReference>
<dbReference type="SMART" id="SM00484">
    <property type="entry name" value="XPGI"/>
    <property type="match status" value="1"/>
</dbReference>
<dbReference type="SMART" id="SM00485">
    <property type="entry name" value="XPGN"/>
    <property type="match status" value="1"/>
</dbReference>
<dbReference type="SUPFAM" id="SSF47807">
    <property type="entry name" value="5' to 3' exonuclease, C-terminal subdomain"/>
    <property type="match status" value="1"/>
</dbReference>
<dbReference type="SUPFAM" id="SSF88723">
    <property type="entry name" value="PIN domain-like"/>
    <property type="match status" value="1"/>
</dbReference>
<dbReference type="PROSITE" id="PS00841">
    <property type="entry name" value="XPG_1"/>
    <property type="match status" value="1"/>
</dbReference>
<dbReference type="PROSITE" id="PS00842">
    <property type="entry name" value="XPG_2"/>
    <property type="match status" value="1"/>
</dbReference>
<protein>
    <recommendedName>
        <fullName evidence="1">Flap endonuclease 1-B</fullName>
        <shortName evidence="1">FEN-1-B</shortName>
        <ecNumber evidence="1">3.1.-.-</ecNumber>
    </recommendedName>
    <alternativeName>
        <fullName evidence="1">Flap structure-specific endonuclease 1-B</fullName>
    </alternativeName>
</protein>
<reference key="1">
    <citation type="journal article" date="2008" name="Science">
        <title>The Physcomitrella genome reveals evolutionary insights into the conquest of land by plants.</title>
        <authorList>
            <person name="Rensing S.A."/>
            <person name="Lang D."/>
            <person name="Zimmer A.D."/>
            <person name="Terry A."/>
            <person name="Salamov A."/>
            <person name="Shapiro H."/>
            <person name="Nishiyama T."/>
            <person name="Perroud P.-F."/>
            <person name="Lindquist E.A."/>
            <person name="Kamisugi Y."/>
            <person name="Tanahashi T."/>
            <person name="Sakakibara K."/>
            <person name="Fujita T."/>
            <person name="Oishi K."/>
            <person name="Shin-I T."/>
            <person name="Kuroki Y."/>
            <person name="Toyoda A."/>
            <person name="Suzuki Y."/>
            <person name="Hashimoto S.-I."/>
            <person name="Yamaguchi K."/>
            <person name="Sugano S."/>
            <person name="Kohara Y."/>
            <person name="Fujiyama A."/>
            <person name="Anterola A."/>
            <person name="Aoki S."/>
            <person name="Ashton N."/>
            <person name="Barbazuk W.B."/>
            <person name="Barker E."/>
            <person name="Bennetzen J.L."/>
            <person name="Blankenship R."/>
            <person name="Cho S.H."/>
            <person name="Dutcher S.K."/>
            <person name="Estelle M."/>
            <person name="Fawcett J.A."/>
            <person name="Gundlach H."/>
            <person name="Hanada K."/>
            <person name="Heyl A."/>
            <person name="Hicks K.A."/>
            <person name="Hughes J."/>
            <person name="Lohr M."/>
            <person name="Mayer K."/>
            <person name="Melkozernov A."/>
            <person name="Murata T."/>
            <person name="Nelson D.R."/>
            <person name="Pils B."/>
            <person name="Prigge M."/>
            <person name="Reiss B."/>
            <person name="Renner T."/>
            <person name="Rombauts S."/>
            <person name="Rushton P.J."/>
            <person name="Sanderfoot A."/>
            <person name="Schween G."/>
            <person name="Shiu S.-H."/>
            <person name="Stueber K."/>
            <person name="Theodoulou F.L."/>
            <person name="Tu H."/>
            <person name="Van de Peer Y."/>
            <person name="Verrier P.J."/>
            <person name="Waters E."/>
            <person name="Wood A."/>
            <person name="Yang L."/>
            <person name="Cove D."/>
            <person name="Cuming A.C."/>
            <person name="Hasebe M."/>
            <person name="Lucas S."/>
            <person name="Mishler B.D."/>
            <person name="Reski R."/>
            <person name="Grigoriev I.V."/>
            <person name="Quatrano R.S."/>
            <person name="Boore J.L."/>
        </authorList>
    </citation>
    <scope>NUCLEOTIDE SEQUENCE [LARGE SCALE GENOMIC DNA]</scope>
    <source>
        <strain>cv. Gransden 2004</strain>
    </source>
</reference>
<comment type="function">
    <text evidence="1">Structure-specific nuclease with 5'-flap endonuclease and 5'-3' exonuclease activities involved in DNA replication and repair. During DNA replication, cleaves the 5'-overhanging flap structure that is generated by displacement synthesis when DNA polymerase encounters the 5'-end of a downstream Okazaki fragment. It enters the flap from the 5'-end and then tracks to cleave the flap base, leaving a nick for ligation. Also involved in the long patch base excision repair (LP-BER) pathway, by cleaving within the apurinic/apyrimidinic (AP) site-terminated flap. Acts as a genome stabilization factor that prevents flaps from equilibrating into structures that lead to duplications and deletions. Also possesses 5'-3' exonuclease activity on nicked or gapped double-stranded DNA, and exhibits RNase H activity. Also involved in replication and repair of rDNA and in repairing mitochondrial DNA.</text>
</comment>
<comment type="cofactor">
    <cofactor evidence="1">
        <name>Mg(2+)</name>
        <dbReference type="ChEBI" id="CHEBI:18420"/>
    </cofactor>
    <text evidence="1">Binds 2 magnesium ions per subunit. They probably participate in the reaction catalyzed by the enzyme. May bind an additional third magnesium ion after substrate binding.</text>
</comment>
<comment type="subunit">
    <text evidence="1">Interacts with PCNA. Three molecules of FEN1 bind to one PCNA trimer with each molecule binding to one PCNA monomer. PCNA stimulates the nuclease activity without altering cleavage specificity.</text>
</comment>
<comment type="subcellular location">
    <subcellularLocation>
        <location evidence="1">Nucleus</location>
        <location evidence="1">Nucleolus</location>
    </subcellularLocation>
    <subcellularLocation>
        <location evidence="1">Nucleus</location>
        <location evidence="1">Nucleoplasm</location>
    </subcellularLocation>
    <subcellularLocation>
        <location evidence="1">Mitochondrion</location>
    </subcellularLocation>
    <text evidence="1">Resides mostly in the nucleoli and relocalizes to the nucleoplasm upon DNA damage.</text>
</comment>
<comment type="PTM">
    <text evidence="1">Phosphorylated. Phosphorylation upon DNA damage induces relocalization to the nuclear plasma.</text>
</comment>
<comment type="similarity">
    <text evidence="1">Belongs to the XPG/RAD2 endonuclease family. FEN1 subfamily.</text>
</comment>
<proteinExistence type="inferred from homology"/>
<evidence type="ECO:0000255" key="1">
    <source>
        <dbReference type="HAMAP-Rule" id="MF_03140"/>
    </source>
</evidence>